<gene>
    <name type="primary">yotJ</name>
    <name type="synonym">yokG</name>
    <name type="ordered locus">BSU19860</name>
</gene>
<accession>O34699</accession>
<accession>Q7BVW3</accession>
<proteinExistence type="predicted"/>
<name>YOTJ_BACSU</name>
<dbReference type="EMBL" id="AF006665">
    <property type="protein sequence ID" value="AAB81143.1"/>
    <property type="molecule type" value="Genomic_DNA"/>
</dbReference>
<dbReference type="EMBL" id="AL009126">
    <property type="protein sequence ID" value="CAB13877.1"/>
    <property type="molecule type" value="Genomic_DNA"/>
</dbReference>
<dbReference type="RefSeq" id="NP_389867.1">
    <property type="nucleotide sequence ID" value="NC_000964.3"/>
</dbReference>
<dbReference type="RefSeq" id="WP_009967444.1">
    <property type="nucleotide sequence ID" value="NZ_OZ025638.1"/>
</dbReference>
<dbReference type="FunCoup" id="O34699">
    <property type="interactions" value="42"/>
</dbReference>
<dbReference type="STRING" id="224308.BSU19860"/>
<dbReference type="PaxDb" id="224308-BSU19860"/>
<dbReference type="EnsemblBacteria" id="CAB13877">
    <property type="protein sequence ID" value="CAB13877"/>
    <property type="gene ID" value="BSU_19860"/>
</dbReference>
<dbReference type="GeneID" id="940079"/>
<dbReference type="KEGG" id="bsu:BSU19860"/>
<dbReference type="PATRIC" id="fig|224308.179.peg.2175"/>
<dbReference type="InParanoid" id="O34699"/>
<dbReference type="OrthoDB" id="9861880at2"/>
<dbReference type="BioCyc" id="BSUB:BSU19860-MONOMER"/>
<dbReference type="Proteomes" id="UP000001570">
    <property type="component" value="Chromosome"/>
</dbReference>
<reference key="1">
    <citation type="journal article" date="1998" name="DNA Res.">
        <title>Sequence analysis of the Bacillus subtilis 168 chromosome region between the sspC and odhA loci (184 degrees-180 degrees).</title>
        <authorList>
            <person name="Ghim S.-Y."/>
            <person name="Choi S.-K."/>
            <person name="Shin B.-S."/>
            <person name="Jeong Y.-M."/>
            <person name="Sorokin A."/>
            <person name="Ehrlich S.D."/>
            <person name="Park S.-H."/>
        </authorList>
    </citation>
    <scope>NUCLEOTIDE SEQUENCE [GENOMIC DNA]</scope>
    <source>
        <strain>168</strain>
    </source>
</reference>
<reference key="2">
    <citation type="journal article" date="1997" name="Nature">
        <title>The complete genome sequence of the Gram-positive bacterium Bacillus subtilis.</title>
        <authorList>
            <person name="Kunst F."/>
            <person name="Ogasawara N."/>
            <person name="Moszer I."/>
            <person name="Albertini A.M."/>
            <person name="Alloni G."/>
            <person name="Azevedo V."/>
            <person name="Bertero M.G."/>
            <person name="Bessieres P."/>
            <person name="Bolotin A."/>
            <person name="Borchert S."/>
            <person name="Borriss R."/>
            <person name="Boursier L."/>
            <person name="Brans A."/>
            <person name="Braun M."/>
            <person name="Brignell S.C."/>
            <person name="Bron S."/>
            <person name="Brouillet S."/>
            <person name="Bruschi C.V."/>
            <person name="Caldwell B."/>
            <person name="Capuano V."/>
            <person name="Carter N.M."/>
            <person name="Choi S.-K."/>
            <person name="Codani J.-J."/>
            <person name="Connerton I.F."/>
            <person name="Cummings N.J."/>
            <person name="Daniel R.A."/>
            <person name="Denizot F."/>
            <person name="Devine K.M."/>
            <person name="Duesterhoeft A."/>
            <person name="Ehrlich S.D."/>
            <person name="Emmerson P.T."/>
            <person name="Entian K.-D."/>
            <person name="Errington J."/>
            <person name="Fabret C."/>
            <person name="Ferrari E."/>
            <person name="Foulger D."/>
            <person name="Fritz C."/>
            <person name="Fujita M."/>
            <person name="Fujita Y."/>
            <person name="Fuma S."/>
            <person name="Galizzi A."/>
            <person name="Galleron N."/>
            <person name="Ghim S.-Y."/>
            <person name="Glaser P."/>
            <person name="Goffeau A."/>
            <person name="Golightly E.J."/>
            <person name="Grandi G."/>
            <person name="Guiseppi G."/>
            <person name="Guy B.J."/>
            <person name="Haga K."/>
            <person name="Haiech J."/>
            <person name="Harwood C.R."/>
            <person name="Henaut A."/>
            <person name="Hilbert H."/>
            <person name="Holsappel S."/>
            <person name="Hosono S."/>
            <person name="Hullo M.-F."/>
            <person name="Itaya M."/>
            <person name="Jones L.-M."/>
            <person name="Joris B."/>
            <person name="Karamata D."/>
            <person name="Kasahara Y."/>
            <person name="Klaerr-Blanchard M."/>
            <person name="Klein C."/>
            <person name="Kobayashi Y."/>
            <person name="Koetter P."/>
            <person name="Koningstein G."/>
            <person name="Krogh S."/>
            <person name="Kumano M."/>
            <person name="Kurita K."/>
            <person name="Lapidus A."/>
            <person name="Lardinois S."/>
            <person name="Lauber J."/>
            <person name="Lazarevic V."/>
            <person name="Lee S.-M."/>
            <person name="Levine A."/>
            <person name="Liu H."/>
            <person name="Masuda S."/>
            <person name="Mauel C."/>
            <person name="Medigue C."/>
            <person name="Medina N."/>
            <person name="Mellado R.P."/>
            <person name="Mizuno M."/>
            <person name="Moestl D."/>
            <person name="Nakai S."/>
            <person name="Noback M."/>
            <person name="Noone D."/>
            <person name="O'Reilly M."/>
            <person name="Ogawa K."/>
            <person name="Ogiwara A."/>
            <person name="Oudega B."/>
            <person name="Park S.-H."/>
            <person name="Parro V."/>
            <person name="Pohl T.M."/>
            <person name="Portetelle D."/>
            <person name="Porwollik S."/>
            <person name="Prescott A.M."/>
            <person name="Presecan E."/>
            <person name="Pujic P."/>
            <person name="Purnelle B."/>
            <person name="Rapoport G."/>
            <person name="Rey M."/>
            <person name="Reynolds S."/>
            <person name="Rieger M."/>
            <person name="Rivolta C."/>
            <person name="Rocha E."/>
            <person name="Roche B."/>
            <person name="Rose M."/>
            <person name="Sadaie Y."/>
            <person name="Sato T."/>
            <person name="Scanlan E."/>
            <person name="Schleich S."/>
            <person name="Schroeter R."/>
            <person name="Scoffone F."/>
            <person name="Sekiguchi J."/>
            <person name="Sekowska A."/>
            <person name="Seror S.J."/>
            <person name="Serror P."/>
            <person name="Shin B.-S."/>
            <person name="Soldo B."/>
            <person name="Sorokin A."/>
            <person name="Tacconi E."/>
            <person name="Takagi T."/>
            <person name="Takahashi H."/>
            <person name="Takemaru K."/>
            <person name="Takeuchi M."/>
            <person name="Tamakoshi A."/>
            <person name="Tanaka T."/>
            <person name="Terpstra P."/>
            <person name="Tognoni A."/>
            <person name="Tosato V."/>
            <person name="Uchiyama S."/>
            <person name="Vandenbol M."/>
            <person name="Vannier F."/>
            <person name="Vassarotti A."/>
            <person name="Viari A."/>
            <person name="Wambutt R."/>
            <person name="Wedler E."/>
            <person name="Wedler H."/>
            <person name="Weitzenegger T."/>
            <person name="Winters P."/>
            <person name="Wipat A."/>
            <person name="Yamamoto H."/>
            <person name="Yamane K."/>
            <person name="Yasumoto K."/>
            <person name="Yata K."/>
            <person name="Yoshida K."/>
            <person name="Yoshikawa H.-F."/>
            <person name="Zumstein E."/>
            <person name="Yoshikawa H."/>
            <person name="Danchin A."/>
        </authorList>
    </citation>
    <scope>NUCLEOTIDE SEQUENCE [LARGE SCALE GENOMIC DNA]</scope>
    <source>
        <strain>168</strain>
    </source>
</reference>
<organism>
    <name type="scientific">Bacillus subtilis (strain 168)</name>
    <dbReference type="NCBI Taxonomy" id="224308"/>
    <lineage>
        <taxon>Bacteria</taxon>
        <taxon>Bacillati</taxon>
        <taxon>Bacillota</taxon>
        <taxon>Bacilli</taxon>
        <taxon>Bacillales</taxon>
        <taxon>Bacillaceae</taxon>
        <taxon>Bacillus</taxon>
    </lineage>
</organism>
<sequence>MCNRNVITIPYEEDMSKYSILHQVGGRIEYFQKEYSQYPMFAFDSEEDYNEYKCLIMQLKKNKKVSSFSF</sequence>
<protein>
    <recommendedName>
        <fullName>SPbeta prophage-derived uncharacterized protein YotJ</fullName>
    </recommendedName>
</protein>
<keyword id="KW-1185">Reference proteome</keyword>
<feature type="chain" id="PRO_0000359967" description="SPbeta prophage-derived uncharacterized protein YotJ">
    <location>
        <begin position="1"/>
        <end position="70"/>
    </location>
</feature>